<accession>B7MWE0</accession>
<dbReference type="EMBL" id="CU928162">
    <property type="protein sequence ID" value="CAR08406.2"/>
    <property type="molecule type" value="Genomic_DNA"/>
</dbReference>
<dbReference type="RefSeq" id="WP_000867217.1">
    <property type="nucleotide sequence ID" value="NC_011745.1"/>
</dbReference>
<dbReference type="SMR" id="B7MWE0"/>
<dbReference type="GeneID" id="93775233"/>
<dbReference type="KEGG" id="ecq:ECED1_2219"/>
<dbReference type="HOGENOM" id="CLU_189289_0_0_6"/>
<dbReference type="Proteomes" id="UP000000748">
    <property type="component" value="Chromosome"/>
</dbReference>
<dbReference type="HAMAP" id="MF_01549">
    <property type="entry name" value="DsrB"/>
    <property type="match status" value="1"/>
</dbReference>
<dbReference type="InterPro" id="IPR019717">
    <property type="entry name" value="Dextransucrase_DSRB"/>
</dbReference>
<dbReference type="NCBIfam" id="NF007981">
    <property type="entry name" value="PRK10708.1"/>
    <property type="match status" value="1"/>
</dbReference>
<dbReference type="Pfam" id="PF10781">
    <property type="entry name" value="DSRB"/>
    <property type="match status" value="1"/>
</dbReference>
<comment type="similarity">
    <text evidence="1">Belongs to the DsrB family.</text>
</comment>
<organism>
    <name type="scientific">Escherichia coli O81 (strain ED1a)</name>
    <dbReference type="NCBI Taxonomy" id="585397"/>
    <lineage>
        <taxon>Bacteria</taxon>
        <taxon>Pseudomonadati</taxon>
        <taxon>Pseudomonadota</taxon>
        <taxon>Gammaproteobacteria</taxon>
        <taxon>Enterobacterales</taxon>
        <taxon>Enterobacteriaceae</taxon>
        <taxon>Escherichia</taxon>
    </lineage>
</organism>
<feature type="chain" id="PRO_1000185311" description="Protein DsrB">
    <location>
        <begin position="1"/>
        <end position="62"/>
    </location>
</feature>
<protein>
    <recommendedName>
        <fullName evidence="1">Protein DsrB</fullName>
    </recommendedName>
</protein>
<evidence type="ECO:0000255" key="1">
    <source>
        <dbReference type="HAMAP-Rule" id="MF_01549"/>
    </source>
</evidence>
<sequence length="62" mass="6946">MKVNDRVTVKTDGGPRRPGVVLAVEEFSEGTMYLVSLEDYPLGIWFFNEAGHQDGIFVEKAE</sequence>
<reference key="1">
    <citation type="journal article" date="2009" name="PLoS Genet.">
        <title>Organised genome dynamics in the Escherichia coli species results in highly diverse adaptive paths.</title>
        <authorList>
            <person name="Touchon M."/>
            <person name="Hoede C."/>
            <person name="Tenaillon O."/>
            <person name="Barbe V."/>
            <person name="Baeriswyl S."/>
            <person name="Bidet P."/>
            <person name="Bingen E."/>
            <person name="Bonacorsi S."/>
            <person name="Bouchier C."/>
            <person name="Bouvet O."/>
            <person name="Calteau A."/>
            <person name="Chiapello H."/>
            <person name="Clermont O."/>
            <person name="Cruveiller S."/>
            <person name="Danchin A."/>
            <person name="Diard M."/>
            <person name="Dossat C."/>
            <person name="Karoui M.E."/>
            <person name="Frapy E."/>
            <person name="Garry L."/>
            <person name="Ghigo J.M."/>
            <person name="Gilles A.M."/>
            <person name="Johnson J."/>
            <person name="Le Bouguenec C."/>
            <person name="Lescat M."/>
            <person name="Mangenot S."/>
            <person name="Martinez-Jehanne V."/>
            <person name="Matic I."/>
            <person name="Nassif X."/>
            <person name="Oztas S."/>
            <person name="Petit M.A."/>
            <person name="Pichon C."/>
            <person name="Rouy Z."/>
            <person name="Ruf C.S."/>
            <person name="Schneider D."/>
            <person name="Tourret J."/>
            <person name="Vacherie B."/>
            <person name="Vallenet D."/>
            <person name="Medigue C."/>
            <person name="Rocha E.P.C."/>
            <person name="Denamur E."/>
        </authorList>
    </citation>
    <scope>NUCLEOTIDE SEQUENCE [LARGE SCALE GENOMIC DNA]</scope>
    <source>
        <strain>ED1a</strain>
    </source>
</reference>
<gene>
    <name evidence="1" type="primary">dsrB</name>
    <name type="ordered locus">ECED1_2219</name>
</gene>
<name>DSRB_ECO81</name>
<proteinExistence type="inferred from homology"/>